<keyword id="KW-0963">Cytoplasm</keyword>
<keyword id="KW-0489">Methyltransferase</keyword>
<keyword id="KW-0698">rRNA processing</keyword>
<keyword id="KW-0949">S-adenosyl-L-methionine</keyword>
<keyword id="KW-0808">Transferase</keyword>
<evidence type="ECO:0000255" key="1">
    <source>
        <dbReference type="HAMAP-Rule" id="MF_00074"/>
    </source>
</evidence>
<evidence type="ECO:0000256" key="2">
    <source>
        <dbReference type="SAM" id="MobiDB-lite"/>
    </source>
</evidence>
<comment type="function">
    <text evidence="1">Specifically methylates the N7 position of a guanine in 16S rRNA.</text>
</comment>
<comment type="subcellular location">
    <subcellularLocation>
        <location evidence="1">Cytoplasm</location>
    </subcellularLocation>
</comment>
<comment type="similarity">
    <text evidence="1">Belongs to the methyltransferase superfamily. RNA methyltransferase RsmG family.</text>
</comment>
<accession>Q02YJ6</accession>
<organism>
    <name type="scientific">Lactococcus lactis subsp. cremoris (strain SK11)</name>
    <dbReference type="NCBI Taxonomy" id="272622"/>
    <lineage>
        <taxon>Bacteria</taxon>
        <taxon>Bacillati</taxon>
        <taxon>Bacillota</taxon>
        <taxon>Bacilli</taxon>
        <taxon>Lactobacillales</taxon>
        <taxon>Streptococcaceae</taxon>
        <taxon>Lactococcus</taxon>
        <taxon>Lactococcus cremoris subsp. cremoris</taxon>
    </lineage>
</organism>
<gene>
    <name evidence="1" type="primary">rsmG</name>
    <name type="ordered locus">LACR_1466</name>
</gene>
<feature type="chain" id="PRO_1000010162" description="Ribosomal RNA small subunit methyltransferase G">
    <location>
        <begin position="1"/>
        <end position="238"/>
    </location>
</feature>
<feature type="region of interest" description="Disordered" evidence="2">
    <location>
        <begin position="217"/>
        <end position="238"/>
    </location>
</feature>
<feature type="binding site" evidence="1">
    <location>
        <position position="78"/>
    </location>
    <ligand>
        <name>S-adenosyl-L-methionine</name>
        <dbReference type="ChEBI" id="CHEBI:59789"/>
    </ligand>
</feature>
<feature type="binding site" evidence="1">
    <location>
        <position position="83"/>
    </location>
    <ligand>
        <name>S-adenosyl-L-methionine</name>
        <dbReference type="ChEBI" id="CHEBI:59789"/>
    </ligand>
</feature>
<feature type="binding site" evidence="1">
    <location>
        <begin position="129"/>
        <end position="130"/>
    </location>
    <ligand>
        <name>S-adenosyl-L-methionine</name>
        <dbReference type="ChEBI" id="CHEBI:59789"/>
    </ligand>
</feature>
<feature type="binding site" evidence="1">
    <location>
        <position position="148"/>
    </location>
    <ligand>
        <name>S-adenosyl-L-methionine</name>
        <dbReference type="ChEBI" id="CHEBI:59789"/>
    </ligand>
</feature>
<reference key="1">
    <citation type="journal article" date="2006" name="Proc. Natl. Acad. Sci. U.S.A.">
        <title>Comparative genomics of the lactic acid bacteria.</title>
        <authorList>
            <person name="Makarova K.S."/>
            <person name="Slesarev A."/>
            <person name="Wolf Y.I."/>
            <person name="Sorokin A."/>
            <person name="Mirkin B."/>
            <person name="Koonin E.V."/>
            <person name="Pavlov A."/>
            <person name="Pavlova N."/>
            <person name="Karamychev V."/>
            <person name="Polouchine N."/>
            <person name="Shakhova V."/>
            <person name="Grigoriev I."/>
            <person name="Lou Y."/>
            <person name="Rohksar D."/>
            <person name="Lucas S."/>
            <person name="Huang K."/>
            <person name="Goodstein D.M."/>
            <person name="Hawkins T."/>
            <person name="Plengvidhya V."/>
            <person name="Welker D."/>
            <person name="Hughes J."/>
            <person name="Goh Y."/>
            <person name="Benson A."/>
            <person name="Baldwin K."/>
            <person name="Lee J.-H."/>
            <person name="Diaz-Muniz I."/>
            <person name="Dosti B."/>
            <person name="Smeianov V."/>
            <person name="Wechter W."/>
            <person name="Barabote R."/>
            <person name="Lorca G."/>
            <person name="Altermann E."/>
            <person name="Barrangou R."/>
            <person name="Ganesan B."/>
            <person name="Xie Y."/>
            <person name="Rawsthorne H."/>
            <person name="Tamir D."/>
            <person name="Parker C."/>
            <person name="Breidt F."/>
            <person name="Broadbent J.R."/>
            <person name="Hutkins R."/>
            <person name="O'Sullivan D."/>
            <person name="Steele J."/>
            <person name="Unlu G."/>
            <person name="Saier M.H. Jr."/>
            <person name="Klaenhammer T."/>
            <person name="Richardson P."/>
            <person name="Kozyavkin S."/>
            <person name="Weimer B.C."/>
            <person name="Mills D.A."/>
        </authorList>
    </citation>
    <scope>NUCLEOTIDE SEQUENCE [LARGE SCALE GENOMIC DNA]</scope>
    <source>
        <strain>SK11</strain>
    </source>
</reference>
<proteinExistence type="inferred from homology"/>
<sequence>MTPDEFLSALTEFDIQLSDKQIKQFERYFELLVEWNEKINLTAITEKNEVYLKHFYDSVAPILYGLITDQPVSILDIGAGAGFPSLPMKIIFPELEVTIIDSLNKRINFLSLLTEELGLENVTLLHGRAEDFGQDSNYRATFDFVTARAVARLSVLSEFTISFLKKNGNLLSLKAAQFEEELTDAKKAIAILGGKFIKEIAYELPNGDERHIAVIEKKKETPKKYPRKAGTPAKSPIK</sequence>
<dbReference type="EC" id="2.1.1.-" evidence="1"/>
<dbReference type="EMBL" id="CP000425">
    <property type="protein sequence ID" value="ABJ72976.1"/>
    <property type="molecule type" value="Genomic_DNA"/>
</dbReference>
<dbReference type="RefSeq" id="WP_011676337.1">
    <property type="nucleotide sequence ID" value="NC_008527.1"/>
</dbReference>
<dbReference type="SMR" id="Q02YJ6"/>
<dbReference type="KEGG" id="llc:LACR_1466"/>
<dbReference type="HOGENOM" id="CLU_065341_0_2_9"/>
<dbReference type="Proteomes" id="UP000000240">
    <property type="component" value="Chromosome"/>
</dbReference>
<dbReference type="GO" id="GO:0005829">
    <property type="term" value="C:cytosol"/>
    <property type="evidence" value="ECO:0007669"/>
    <property type="project" value="TreeGrafter"/>
</dbReference>
<dbReference type="GO" id="GO:0070043">
    <property type="term" value="F:rRNA (guanine-N7-)-methyltransferase activity"/>
    <property type="evidence" value="ECO:0007669"/>
    <property type="project" value="UniProtKB-UniRule"/>
</dbReference>
<dbReference type="CDD" id="cd02440">
    <property type="entry name" value="AdoMet_MTases"/>
    <property type="match status" value="1"/>
</dbReference>
<dbReference type="FunFam" id="3.40.50.150:FF:000041">
    <property type="entry name" value="Ribosomal RNA small subunit methyltransferase G"/>
    <property type="match status" value="1"/>
</dbReference>
<dbReference type="Gene3D" id="3.40.50.150">
    <property type="entry name" value="Vaccinia Virus protein VP39"/>
    <property type="match status" value="1"/>
</dbReference>
<dbReference type="HAMAP" id="MF_00074">
    <property type="entry name" value="16SrRNA_methyltr_G"/>
    <property type="match status" value="1"/>
</dbReference>
<dbReference type="InterPro" id="IPR003682">
    <property type="entry name" value="rRNA_ssu_MeTfrase_G"/>
</dbReference>
<dbReference type="InterPro" id="IPR029063">
    <property type="entry name" value="SAM-dependent_MTases_sf"/>
</dbReference>
<dbReference type="NCBIfam" id="TIGR00138">
    <property type="entry name" value="rsmG_gidB"/>
    <property type="match status" value="1"/>
</dbReference>
<dbReference type="PANTHER" id="PTHR31760">
    <property type="entry name" value="S-ADENOSYL-L-METHIONINE-DEPENDENT METHYLTRANSFERASES SUPERFAMILY PROTEIN"/>
    <property type="match status" value="1"/>
</dbReference>
<dbReference type="PANTHER" id="PTHR31760:SF0">
    <property type="entry name" value="S-ADENOSYL-L-METHIONINE-DEPENDENT METHYLTRANSFERASES SUPERFAMILY PROTEIN"/>
    <property type="match status" value="1"/>
</dbReference>
<dbReference type="Pfam" id="PF02527">
    <property type="entry name" value="GidB"/>
    <property type="match status" value="1"/>
</dbReference>
<dbReference type="PIRSF" id="PIRSF003078">
    <property type="entry name" value="GidB"/>
    <property type="match status" value="1"/>
</dbReference>
<dbReference type="SUPFAM" id="SSF53335">
    <property type="entry name" value="S-adenosyl-L-methionine-dependent methyltransferases"/>
    <property type="match status" value="1"/>
</dbReference>
<name>RSMG_LACLS</name>
<protein>
    <recommendedName>
        <fullName evidence="1">Ribosomal RNA small subunit methyltransferase G</fullName>
        <ecNumber evidence="1">2.1.1.-</ecNumber>
    </recommendedName>
    <alternativeName>
        <fullName evidence="1">16S rRNA 7-methylguanosine methyltransferase</fullName>
        <shortName evidence="1">16S rRNA m7G methyltransferase</shortName>
    </alternativeName>
</protein>